<dbReference type="EC" id="2.1.2.11" evidence="1"/>
<dbReference type="EMBL" id="CP000143">
    <property type="protein sequence ID" value="ABA77903.1"/>
    <property type="molecule type" value="Genomic_DNA"/>
</dbReference>
<dbReference type="RefSeq" id="WP_009563678.1">
    <property type="nucleotide sequence ID" value="NZ_CP030271.1"/>
</dbReference>
<dbReference type="RefSeq" id="YP_351804.1">
    <property type="nucleotide sequence ID" value="NC_007493.2"/>
</dbReference>
<dbReference type="SMR" id="Q3J5N1"/>
<dbReference type="STRING" id="272943.RSP_1756"/>
<dbReference type="EnsemblBacteria" id="ABA77903">
    <property type="protein sequence ID" value="ABA77903"/>
    <property type="gene ID" value="RSP_1756"/>
</dbReference>
<dbReference type="GeneID" id="67445541"/>
<dbReference type="KEGG" id="rsp:RSP_1756"/>
<dbReference type="PATRIC" id="fig|272943.9.peg.634"/>
<dbReference type="eggNOG" id="COG0413">
    <property type="taxonomic scope" value="Bacteria"/>
</dbReference>
<dbReference type="OrthoDB" id="9781789at2"/>
<dbReference type="PhylomeDB" id="Q3J5N1"/>
<dbReference type="UniPathway" id="UPA00028">
    <property type="reaction ID" value="UER00003"/>
</dbReference>
<dbReference type="Proteomes" id="UP000002703">
    <property type="component" value="Chromosome 1"/>
</dbReference>
<dbReference type="GO" id="GO:0005737">
    <property type="term" value="C:cytoplasm"/>
    <property type="evidence" value="ECO:0007669"/>
    <property type="project" value="UniProtKB-SubCell"/>
</dbReference>
<dbReference type="GO" id="GO:0003864">
    <property type="term" value="F:3-methyl-2-oxobutanoate hydroxymethyltransferase activity"/>
    <property type="evidence" value="ECO:0007669"/>
    <property type="project" value="UniProtKB-UniRule"/>
</dbReference>
<dbReference type="GO" id="GO:0000287">
    <property type="term" value="F:magnesium ion binding"/>
    <property type="evidence" value="ECO:0007669"/>
    <property type="project" value="TreeGrafter"/>
</dbReference>
<dbReference type="GO" id="GO:0015940">
    <property type="term" value="P:pantothenate biosynthetic process"/>
    <property type="evidence" value="ECO:0007669"/>
    <property type="project" value="UniProtKB-UniRule"/>
</dbReference>
<dbReference type="CDD" id="cd06557">
    <property type="entry name" value="KPHMT-like"/>
    <property type="match status" value="1"/>
</dbReference>
<dbReference type="FunFam" id="3.20.20.60:FF:000003">
    <property type="entry name" value="3-methyl-2-oxobutanoate hydroxymethyltransferase"/>
    <property type="match status" value="1"/>
</dbReference>
<dbReference type="Gene3D" id="3.20.20.60">
    <property type="entry name" value="Phosphoenolpyruvate-binding domains"/>
    <property type="match status" value="1"/>
</dbReference>
<dbReference type="HAMAP" id="MF_00156">
    <property type="entry name" value="PanB"/>
    <property type="match status" value="1"/>
</dbReference>
<dbReference type="InterPro" id="IPR003700">
    <property type="entry name" value="Pantoate_hydroxy_MeTrfase"/>
</dbReference>
<dbReference type="InterPro" id="IPR015813">
    <property type="entry name" value="Pyrv/PenolPyrv_kinase-like_dom"/>
</dbReference>
<dbReference type="InterPro" id="IPR040442">
    <property type="entry name" value="Pyrv_kinase-like_dom_sf"/>
</dbReference>
<dbReference type="NCBIfam" id="TIGR00222">
    <property type="entry name" value="panB"/>
    <property type="match status" value="1"/>
</dbReference>
<dbReference type="NCBIfam" id="NF001452">
    <property type="entry name" value="PRK00311.1"/>
    <property type="match status" value="1"/>
</dbReference>
<dbReference type="PANTHER" id="PTHR20881">
    <property type="entry name" value="3-METHYL-2-OXOBUTANOATE HYDROXYMETHYLTRANSFERASE"/>
    <property type="match status" value="1"/>
</dbReference>
<dbReference type="PANTHER" id="PTHR20881:SF0">
    <property type="entry name" value="3-METHYL-2-OXOBUTANOATE HYDROXYMETHYLTRANSFERASE"/>
    <property type="match status" value="1"/>
</dbReference>
<dbReference type="Pfam" id="PF02548">
    <property type="entry name" value="Pantoate_transf"/>
    <property type="match status" value="1"/>
</dbReference>
<dbReference type="PIRSF" id="PIRSF000388">
    <property type="entry name" value="Pantoate_hydroxy_MeTrfase"/>
    <property type="match status" value="1"/>
</dbReference>
<dbReference type="SUPFAM" id="SSF51621">
    <property type="entry name" value="Phosphoenolpyruvate/pyruvate domain"/>
    <property type="match status" value="1"/>
</dbReference>
<sequence>MSVNSPVRPVMAADILARKGGEPIVCLTAYTTPMARLVDAHCDLTLVGDSLGMVVHGLPTTLGVTMEMMILHGQAVARGTSRSMLVVDMPFGSYEESPAQAFANARRLMAETGCAAVKLEGGQHMAETIRFLVARGVPVMAHIGLTPQAVNALGGYKVQGRGADAERVMEDAIAVAEAGAFSVVLEKVPDGLSQRITQRIAIPTIGIGASAHCDGQVLVLDDMLGLFADFRPKFVKRYGELGASADEAIATYAAEVRARRFPAPEHVFADELKGKAQ</sequence>
<name>PANB_CERS4</name>
<accession>Q3J5N1</accession>
<feature type="chain" id="PRO_0000297351" description="3-methyl-2-oxobutanoate hydroxymethyltransferase">
    <location>
        <begin position="1"/>
        <end position="277"/>
    </location>
</feature>
<feature type="active site" description="Proton acceptor" evidence="1">
    <location>
        <position position="186"/>
    </location>
</feature>
<feature type="binding site" evidence="1">
    <location>
        <begin position="49"/>
        <end position="50"/>
    </location>
    <ligand>
        <name>3-methyl-2-oxobutanoate</name>
        <dbReference type="ChEBI" id="CHEBI:11851"/>
    </ligand>
</feature>
<feature type="binding site" evidence="1">
    <location>
        <position position="49"/>
    </location>
    <ligand>
        <name>Mg(2+)</name>
        <dbReference type="ChEBI" id="CHEBI:18420"/>
    </ligand>
</feature>
<feature type="binding site" evidence="1">
    <location>
        <position position="88"/>
    </location>
    <ligand>
        <name>3-methyl-2-oxobutanoate</name>
        <dbReference type="ChEBI" id="CHEBI:11851"/>
    </ligand>
</feature>
<feature type="binding site" evidence="1">
    <location>
        <position position="88"/>
    </location>
    <ligand>
        <name>Mg(2+)</name>
        <dbReference type="ChEBI" id="CHEBI:18420"/>
    </ligand>
</feature>
<feature type="binding site" evidence="1">
    <location>
        <position position="118"/>
    </location>
    <ligand>
        <name>3-methyl-2-oxobutanoate</name>
        <dbReference type="ChEBI" id="CHEBI:11851"/>
    </ligand>
</feature>
<feature type="binding site" evidence="1">
    <location>
        <position position="120"/>
    </location>
    <ligand>
        <name>Mg(2+)</name>
        <dbReference type="ChEBI" id="CHEBI:18420"/>
    </ligand>
</feature>
<comment type="function">
    <text evidence="1">Catalyzes the reversible reaction in which hydroxymethyl group from 5,10-methylenetetrahydrofolate is transferred onto alpha-ketoisovalerate to form ketopantoate.</text>
</comment>
<comment type="catalytic activity">
    <reaction evidence="1">
        <text>3-methyl-2-oxobutanoate + (6R)-5,10-methylene-5,6,7,8-tetrahydrofolate + H2O = 2-dehydropantoate + (6S)-5,6,7,8-tetrahydrofolate</text>
        <dbReference type="Rhea" id="RHEA:11824"/>
        <dbReference type="ChEBI" id="CHEBI:11561"/>
        <dbReference type="ChEBI" id="CHEBI:11851"/>
        <dbReference type="ChEBI" id="CHEBI:15377"/>
        <dbReference type="ChEBI" id="CHEBI:15636"/>
        <dbReference type="ChEBI" id="CHEBI:57453"/>
        <dbReference type="EC" id="2.1.2.11"/>
    </reaction>
</comment>
<comment type="cofactor">
    <cofactor evidence="1">
        <name>Mg(2+)</name>
        <dbReference type="ChEBI" id="CHEBI:18420"/>
    </cofactor>
    <text evidence="1">Binds 1 Mg(2+) ion per subunit.</text>
</comment>
<comment type="pathway">
    <text evidence="1">Cofactor biosynthesis; (R)-pantothenate biosynthesis; (R)-pantoate from 3-methyl-2-oxobutanoate: step 1/2.</text>
</comment>
<comment type="subunit">
    <text evidence="1">Homodecamer; pentamer of dimers.</text>
</comment>
<comment type="subcellular location">
    <subcellularLocation>
        <location evidence="1">Cytoplasm</location>
    </subcellularLocation>
</comment>
<comment type="similarity">
    <text evidence="1">Belongs to the PanB family.</text>
</comment>
<protein>
    <recommendedName>
        <fullName evidence="1">3-methyl-2-oxobutanoate hydroxymethyltransferase</fullName>
        <ecNumber evidence="1">2.1.2.11</ecNumber>
    </recommendedName>
    <alternativeName>
        <fullName evidence="1">Ketopantoate hydroxymethyltransferase</fullName>
        <shortName evidence="1">KPHMT</shortName>
    </alternativeName>
</protein>
<reference key="1">
    <citation type="submission" date="2005-09" db="EMBL/GenBank/DDBJ databases">
        <title>Complete sequence of chromosome 1 of Rhodobacter sphaeroides 2.4.1.</title>
        <authorList>
            <person name="Copeland A."/>
            <person name="Lucas S."/>
            <person name="Lapidus A."/>
            <person name="Barry K."/>
            <person name="Detter J.C."/>
            <person name="Glavina T."/>
            <person name="Hammon N."/>
            <person name="Israni S."/>
            <person name="Pitluck S."/>
            <person name="Richardson P."/>
            <person name="Mackenzie C."/>
            <person name="Choudhary M."/>
            <person name="Larimer F."/>
            <person name="Hauser L.J."/>
            <person name="Land M."/>
            <person name="Donohue T.J."/>
            <person name="Kaplan S."/>
        </authorList>
    </citation>
    <scope>NUCLEOTIDE SEQUENCE [LARGE SCALE GENOMIC DNA]</scope>
    <source>
        <strain>ATCC 17023 / DSM 158 / JCM 6121 / CCUG 31486 / LMG 2827 / NBRC 12203 / NCIMB 8253 / ATH 2.4.1.</strain>
    </source>
</reference>
<evidence type="ECO:0000255" key="1">
    <source>
        <dbReference type="HAMAP-Rule" id="MF_00156"/>
    </source>
</evidence>
<organism>
    <name type="scientific">Cereibacter sphaeroides (strain ATCC 17023 / DSM 158 / JCM 6121 / CCUG 31486 / LMG 2827 / NBRC 12203 / NCIMB 8253 / ATH 2.4.1.)</name>
    <name type="common">Rhodobacter sphaeroides</name>
    <dbReference type="NCBI Taxonomy" id="272943"/>
    <lineage>
        <taxon>Bacteria</taxon>
        <taxon>Pseudomonadati</taxon>
        <taxon>Pseudomonadota</taxon>
        <taxon>Alphaproteobacteria</taxon>
        <taxon>Rhodobacterales</taxon>
        <taxon>Paracoccaceae</taxon>
        <taxon>Cereibacter</taxon>
    </lineage>
</organism>
<keyword id="KW-0963">Cytoplasm</keyword>
<keyword id="KW-0460">Magnesium</keyword>
<keyword id="KW-0479">Metal-binding</keyword>
<keyword id="KW-0566">Pantothenate biosynthesis</keyword>
<keyword id="KW-1185">Reference proteome</keyword>
<keyword id="KW-0808">Transferase</keyword>
<proteinExistence type="inferred from homology"/>
<gene>
    <name evidence="1" type="primary">panB</name>
    <name type="ordered locus">RHOS4_03350</name>
    <name type="ORF">RSP_1756</name>
</gene>